<sequence length="455" mass="52117">MKDKYLTVTALTKYVKRKMDSDPHLRDIWLRGEISNFKHHSRGHMYLTIKDDSARIQAVMFASSNRKLLFHPENGMNVLIRGEISVFEAYGQYQLYIHEMEPDGIGSLYQAFEQLKERLHKQGYFADEYKKPIPRYPKNIAVITSPTGAAIRDILTTMKRRYPSVKITVFPVLVQGNQAKASIARSIQQADSLSYDVIIVGRGGGSIEELWSFNEEEVARAIFESKTPIISAVGHETDTTISDFVADLRAPTPTAAGELAVPSQVELLDKIEIQKRQLARLLKQYISQHETILHQLRQTYAFKYPHQLVKQKEQELDSTMDNLQRRMKSKVSDDKLTHNHLIKRLSSQHPQRELRLAIDKLRQLHSLQNKMMNNYLEQQSQRLYSQIDKLSLVNPLEIMKRGYALPYNEDGALIKSVKHLHINDTIQLRIADGEVTGKVTAIKEANENGNEGSNV</sequence>
<organism>
    <name type="scientific">Oceanobacillus iheyensis (strain DSM 14371 / CIP 107618 / JCM 11309 / KCTC 3954 / HTE831)</name>
    <dbReference type="NCBI Taxonomy" id="221109"/>
    <lineage>
        <taxon>Bacteria</taxon>
        <taxon>Bacillati</taxon>
        <taxon>Bacillota</taxon>
        <taxon>Bacilli</taxon>
        <taxon>Bacillales</taxon>
        <taxon>Bacillaceae</taxon>
        <taxon>Oceanobacillus</taxon>
    </lineage>
</organism>
<keyword id="KW-0963">Cytoplasm</keyword>
<keyword id="KW-0269">Exonuclease</keyword>
<keyword id="KW-0378">Hydrolase</keyword>
<keyword id="KW-0540">Nuclease</keyword>
<keyword id="KW-1185">Reference proteome</keyword>
<protein>
    <recommendedName>
        <fullName evidence="1">Exodeoxyribonuclease 7 large subunit</fullName>
        <ecNumber evidence="1">3.1.11.6</ecNumber>
    </recommendedName>
    <alternativeName>
        <fullName evidence="1">Exodeoxyribonuclease VII large subunit</fullName>
        <shortName evidence="1">Exonuclease VII large subunit</shortName>
    </alternativeName>
</protein>
<dbReference type="EC" id="3.1.11.6" evidence="1"/>
<dbReference type="EMBL" id="BA000028">
    <property type="protein sequence ID" value="BAC13835.1"/>
    <property type="molecule type" value="Genomic_DNA"/>
</dbReference>
<dbReference type="RefSeq" id="WP_011066276.1">
    <property type="nucleotide sequence ID" value="NC_004193.1"/>
</dbReference>
<dbReference type="SMR" id="Q8EQ44"/>
<dbReference type="STRING" id="221109.gene:10734119"/>
<dbReference type="KEGG" id="oih:OB1879"/>
<dbReference type="eggNOG" id="COG1570">
    <property type="taxonomic scope" value="Bacteria"/>
</dbReference>
<dbReference type="HOGENOM" id="CLU_023625_3_1_9"/>
<dbReference type="OrthoDB" id="9802795at2"/>
<dbReference type="PhylomeDB" id="Q8EQ44"/>
<dbReference type="Proteomes" id="UP000000822">
    <property type="component" value="Chromosome"/>
</dbReference>
<dbReference type="GO" id="GO:0005737">
    <property type="term" value="C:cytoplasm"/>
    <property type="evidence" value="ECO:0007669"/>
    <property type="project" value="UniProtKB-SubCell"/>
</dbReference>
<dbReference type="GO" id="GO:0009318">
    <property type="term" value="C:exodeoxyribonuclease VII complex"/>
    <property type="evidence" value="ECO:0007669"/>
    <property type="project" value="InterPro"/>
</dbReference>
<dbReference type="GO" id="GO:0008855">
    <property type="term" value="F:exodeoxyribonuclease VII activity"/>
    <property type="evidence" value="ECO:0007669"/>
    <property type="project" value="UniProtKB-UniRule"/>
</dbReference>
<dbReference type="GO" id="GO:0003676">
    <property type="term" value="F:nucleic acid binding"/>
    <property type="evidence" value="ECO:0007669"/>
    <property type="project" value="InterPro"/>
</dbReference>
<dbReference type="GO" id="GO:0006308">
    <property type="term" value="P:DNA catabolic process"/>
    <property type="evidence" value="ECO:0007669"/>
    <property type="project" value="UniProtKB-UniRule"/>
</dbReference>
<dbReference type="CDD" id="cd04489">
    <property type="entry name" value="ExoVII_LU_OBF"/>
    <property type="match status" value="1"/>
</dbReference>
<dbReference type="HAMAP" id="MF_00378">
    <property type="entry name" value="Exonuc_7_L"/>
    <property type="match status" value="1"/>
</dbReference>
<dbReference type="InterPro" id="IPR003753">
    <property type="entry name" value="Exonuc_VII_L"/>
</dbReference>
<dbReference type="InterPro" id="IPR020579">
    <property type="entry name" value="Exonuc_VII_lsu_C"/>
</dbReference>
<dbReference type="InterPro" id="IPR025824">
    <property type="entry name" value="OB-fold_nuc-bd_dom"/>
</dbReference>
<dbReference type="NCBIfam" id="TIGR00237">
    <property type="entry name" value="xseA"/>
    <property type="match status" value="1"/>
</dbReference>
<dbReference type="PANTHER" id="PTHR30008">
    <property type="entry name" value="EXODEOXYRIBONUCLEASE 7 LARGE SUBUNIT"/>
    <property type="match status" value="1"/>
</dbReference>
<dbReference type="PANTHER" id="PTHR30008:SF0">
    <property type="entry name" value="EXODEOXYRIBONUCLEASE 7 LARGE SUBUNIT"/>
    <property type="match status" value="1"/>
</dbReference>
<dbReference type="Pfam" id="PF02601">
    <property type="entry name" value="Exonuc_VII_L"/>
    <property type="match status" value="1"/>
</dbReference>
<dbReference type="Pfam" id="PF13742">
    <property type="entry name" value="tRNA_anti_2"/>
    <property type="match status" value="1"/>
</dbReference>
<gene>
    <name evidence="1" type="primary">xseA</name>
    <name type="ordered locus">OB1879</name>
</gene>
<evidence type="ECO:0000255" key="1">
    <source>
        <dbReference type="HAMAP-Rule" id="MF_00378"/>
    </source>
</evidence>
<comment type="function">
    <text evidence="1">Bidirectionally degrades single-stranded DNA into large acid-insoluble oligonucleotides, which are then degraded further into small acid-soluble oligonucleotides.</text>
</comment>
<comment type="catalytic activity">
    <reaction evidence="1">
        <text>Exonucleolytic cleavage in either 5'- to 3'- or 3'- to 5'-direction to yield nucleoside 5'-phosphates.</text>
        <dbReference type="EC" id="3.1.11.6"/>
    </reaction>
</comment>
<comment type="subunit">
    <text evidence="1">Heterooligomer composed of large and small subunits.</text>
</comment>
<comment type="subcellular location">
    <subcellularLocation>
        <location evidence="1">Cytoplasm</location>
    </subcellularLocation>
</comment>
<comment type="similarity">
    <text evidence="1">Belongs to the XseA family.</text>
</comment>
<name>EX7L_OCEIH</name>
<accession>Q8EQ44</accession>
<reference key="1">
    <citation type="journal article" date="2002" name="Nucleic Acids Res.">
        <title>Genome sequence of Oceanobacillus iheyensis isolated from the Iheya Ridge and its unexpected adaptive capabilities to extreme environments.</title>
        <authorList>
            <person name="Takami H."/>
            <person name="Takaki Y."/>
            <person name="Uchiyama I."/>
        </authorList>
    </citation>
    <scope>NUCLEOTIDE SEQUENCE [LARGE SCALE GENOMIC DNA]</scope>
    <source>
        <strain>DSM 14371 / CIP 107618 / JCM 11309 / KCTC 3954 / HTE831</strain>
    </source>
</reference>
<feature type="chain" id="PRO_0000197864" description="Exodeoxyribonuclease 7 large subunit">
    <location>
        <begin position="1"/>
        <end position="455"/>
    </location>
</feature>
<proteinExistence type="inferred from homology"/>